<dbReference type="EMBL" id="AY261361">
    <property type="status" value="NOT_ANNOTATED_CDS"/>
    <property type="molecule type" value="Genomic_DNA"/>
</dbReference>
<dbReference type="SMR" id="P0CAD2"/>
<dbReference type="Proteomes" id="UP000000860">
    <property type="component" value="Segment"/>
</dbReference>
<dbReference type="GO" id="GO:0044423">
    <property type="term" value="C:virion component"/>
    <property type="evidence" value="ECO:0007669"/>
    <property type="project" value="UniProtKB-KW"/>
</dbReference>
<evidence type="ECO:0000250" key="1">
    <source>
        <dbReference type="UniProtKB" id="Q65180"/>
    </source>
</evidence>
<evidence type="ECO:0000305" key="2"/>
<accession>P0CAD2</accession>
<feature type="chain" id="PRO_0000373636" description="Uncharacterized protein CP312R">
    <location>
        <begin position="1"/>
        <end position="312"/>
    </location>
</feature>
<reference key="1">
    <citation type="submission" date="2003-03" db="EMBL/GenBank/DDBJ databases">
        <title>African swine fever virus genomes.</title>
        <authorList>
            <person name="Kutish G.F."/>
            <person name="Rock D.L."/>
        </authorList>
    </citation>
    <scope>NUCLEOTIDE SEQUENCE [LARGE SCALE GENOMIC DNA]</scope>
</reference>
<protein>
    <recommendedName>
        <fullName>Uncharacterized protein CP312R</fullName>
        <shortName>pCP312R</shortName>
    </recommendedName>
</protein>
<organism>
    <name type="scientific">African swine fever virus (isolate Tick/Malawi/Lil 20-1/1983)</name>
    <name type="common">ASFV</name>
    <dbReference type="NCBI Taxonomy" id="10500"/>
    <lineage>
        <taxon>Viruses</taxon>
        <taxon>Varidnaviria</taxon>
        <taxon>Bamfordvirae</taxon>
        <taxon>Nucleocytoviricota</taxon>
        <taxon>Pokkesviricetes</taxon>
        <taxon>Asfuvirales</taxon>
        <taxon>Asfarviridae</taxon>
        <taxon>Asfivirus</taxon>
        <taxon>African swine fever virus</taxon>
    </lineage>
</organism>
<organismHost>
    <name type="scientific">Ornithodoros</name>
    <name type="common">relapsing fever ticks</name>
    <dbReference type="NCBI Taxonomy" id="6937"/>
</organismHost>
<organismHost>
    <name type="scientific">Phacochoerus aethiopicus</name>
    <name type="common">Warthog</name>
    <dbReference type="NCBI Taxonomy" id="85517"/>
</organismHost>
<organismHost>
    <name type="scientific">Phacochoerus africanus</name>
    <name type="common">Warthog</name>
    <dbReference type="NCBI Taxonomy" id="41426"/>
</organismHost>
<organismHost>
    <name type="scientific">Potamochoerus larvatus</name>
    <name type="common">Bushpig</name>
    <dbReference type="NCBI Taxonomy" id="273792"/>
</organismHost>
<organismHost>
    <name type="scientific">Sus scrofa</name>
    <name type="common">Pig</name>
    <dbReference type="NCBI Taxonomy" id="9823"/>
</organismHost>
<proteinExistence type="inferred from homology"/>
<gene>
    <name type="ordered locus">Mal-104</name>
</gene>
<name>VF312_ASFM2</name>
<keyword id="KW-0244">Early protein</keyword>
<keyword id="KW-0946">Virion</keyword>
<sequence>MLLVKMTTTIFYADDLLQALQQAKAEKNFSSVFSLDWDKLRIAKRNTSVKYVTVNVTVKGKKAPLMFSFQNEKHVGTIPPSTDEEVIRMNAENPKFLVKRRDRDPCLQFNKYKISPPLEDDGLTVKKNEQGEEIYPGDEEKSKLFQIIELLEEAFEDAVQKGPETMKTKNIIKLVQRKISSSAIKNADKPLPNPIARIRIKVNPTTTMLAPILLDKNKPITLQNGKTSFEELKDEDGTKANPDNIHKLIESHSIHDGIINARSICISNMGISFPLCLEMGVVKVFEKNNGIDVDSIYGSDDITNLINQVAIA</sequence>
<comment type="subcellular location">
    <subcellularLocation>
        <location evidence="1">Virion</location>
    </subcellularLocation>
</comment>
<comment type="induction">
    <text evidence="2">Expressed in the early phase of the viral replicative cycle.</text>
</comment>
<comment type="similarity">
    <text evidence="2">Belongs to the asfivirus CP312R family.</text>
</comment>